<protein>
    <recommendedName>
        <fullName>F-box/kelch-repeat protein At4g39753</fullName>
    </recommendedName>
</protein>
<sequence>MVTFWAETAASAATTSKGEPPSKKRKTNPSPPPSLLSLPDVLILNCLSRIPKSYYPKLSIVSKTFRDLIISIDLNHARFHHKTQEHFFHVCLKLPDRPLPSWYTLWIKPQGFDDKEEEKKKKKKSTLVQVPSSYASQTPLLVVGIDSDVYAFKQCYPPSRVMFVRNKECVIWRNAPDMTVARANPVAYVFDRKIYVMGGCAETESANWGEVFDPKTQTWEPLPVPSPELRFSSMIRKIEMIQGKFYVRSNDSKDSVYDPIREKWNVAAKPQLNDSRCSVGNVWYSCRPNSFLWFDNEIKNWRLIKGLSSLNHSCRSGLIETVCYDGNLLLLWDKPTKPRRRVCEDKYICCALISFNKRKNGQVWGKVEWSNVVLTVPSSYRFLRSTVIRT</sequence>
<feature type="chain" id="PRO_0000274963" description="F-box/kelch-repeat protein At4g39753">
    <location>
        <begin position="1"/>
        <end position="390"/>
    </location>
</feature>
<feature type="domain" description="F-box">
    <location>
        <begin position="32"/>
        <end position="79"/>
    </location>
</feature>
<feature type="repeat" description="Kelch 1">
    <location>
        <begin position="139"/>
        <end position="192"/>
    </location>
</feature>
<feature type="repeat" description="Kelch 2">
    <location>
        <begin position="193"/>
        <end position="243"/>
    </location>
</feature>
<feature type="repeat" description="Kelch 3">
    <location>
        <begin position="245"/>
        <end position="286"/>
    </location>
</feature>
<feature type="repeat" description="Kelch 4">
    <location>
        <begin position="288"/>
        <end position="321"/>
    </location>
</feature>
<feature type="region of interest" description="Disordered" evidence="1">
    <location>
        <begin position="1"/>
        <end position="33"/>
    </location>
</feature>
<feature type="compositionally biased region" description="Low complexity" evidence="1">
    <location>
        <begin position="1"/>
        <end position="16"/>
    </location>
</feature>
<feature type="sequence conflict" description="In Ref. 3; AAM62525." evidence="2" ref="3">
    <original>L</original>
    <variation>F</variation>
    <location>
        <position position="35"/>
    </location>
</feature>
<keyword id="KW-0880">Kelch repeat</keyword>
<keyword id="KW-1185">Reference proteome</keyword>
<keyword id="KW-0677">Repeat</keyword>
<evidence type="ECO:0000256" key="1">
    <source>
        <dbReference type="SAM" id="MobiDB-lite"/>
    </source>
</evidence>
<evidence type="ECO:0000305" key="2"/>
<reference key="1">
    <citation type="journal article" date="1999" name="Nature">
        <title>Sequence and analysis of chromosome 4 of the plant Arabidopsis thaliana.</title>
        <authorList>
            <person name="Mayer K.F.X."/>
            <person name="Schueller C."/>
            <person name="Wambutt R."/>
            <person name="Murphy G."/>
            <person name="Volckaert G."/>
            <person name="Pohl T."/>
            <person name="Duesterhoeft A."/>
            <person name="Stiekema W."/>
            <person name="Entian K.-D."/>
            <person name="Terryn N."/>
            <person name="Harris B."/>
            <person name="Ansorge W."/>
            <person name="Brandt P."/>
            <person name="Grivell L.A."/>
            <person name="Rieger M."/>
            <person name="Weichselgartner M."/>
            <person name="de Simone V."/>
            <person name="Obermaier B."/>
            <person name="Mache R."/>
            <person name="Mueller M."/>
            <person name="Kreis M."/>
            <person name="Delseny M."/>
            <person name="Puigdomenech P."/>
            <person name="Watson M."/>
            <person name="Schmidtheini T."/>
            <person name="Reichert B."/>
            <person name="Portetelle D."/>
            <person name="Perez-Alonso M."/>
            <person name="Boutry M."/>
            <person name="Bancroft I."/>
            <person name="Vos P."/>
            <person name="Hoheisel J."/>
            <person name="Zimmermann W."/>
            <person name="Wedler H."/>
            <person name="Ridley P."/>
            <person name="Langham S.-A."/>
            <person name="McCullagh B."/>
            <person name="Bilham L."/>
            <person name="Robben J."/>
            <person name="van der Schueren J."/>
            <person name="Grymonprez B."/>
            <person name="Chuang Y.-J."/>
            <person name="Vandenbussche F."/>
            <person name="Braeken M."/>
            <person name="Weltjens I."/>
            <person name="Voet M."/>
            <person name="Bastiaens I."/>
            <person name="Aert R."/>
            <person name="Defoor E."/>
            <person name="Weitzenegger T."/>
            <person name="Bothe G."/>
            <person name="Ramsperger U."/>
            <person name="Hilbert H."/>
            <person name="Braun M."/>
            <person name="Holzer E."/>
            <person name="Brandt A."/>
            <person name="Peters S."/>
            <person name="van Staveren M."/>
            <person name="Dirkse W."/>
            <person name="Mooijman P."/>
            <person name="Klein Lankhorst R."/>
            <person name="Rose M."/>
            <person name="Hauf J."/>
            <person name="Koetter P."/>
            <person name="Berneiser S."/>
            <person name="Hempel S."/>
            <person name="Feldpausch M."/>
            <person name="Lamberth S."/>
            <person name="Van den Daele H."/>
            <person name="De Keyser A."/>
            <person name="Buysshaert C."/>
            <person name="Gielen J."/>
            <person name="Villarroel R."/>
            <person name="De Clercq R."/>
            <person name="van Montagu M."/>
            <person name="Rogers J."/>
            <person name="Cronin A."/>
            <person name="Quail M.A."/>
            <person name="Bray-Allen S."/>
            <person name="Clark L."/>
            <person name="Doggett J."/>
            <person name="Hall S."/>
            <person name="Kay M."/>
            <person name="Lennard N."/>
            <person name="McLay K."/>
            <person name="Mayes R."/>
            <person name="Pettett A."/>
            <person name="Rajandream M.A."/>
            <person name="Lyne M."/>
            <person name="Benes V."/>
            <person name="Rechmann S."/>
            <person name="Borkova D."/>
            <person name="Bloecker H."/>
            <person name="Scharfe M."/>
            <person name="Grimm M."/>
            <person name="Loehnert T.-H."/>
            <person name="Dose S."/>
            <person name="de Haan M."/>
            <person name="Maarse A.C."/>
            <person name="Schaefer M."/>
            <person name="Mueller-Auer S."/>
            <person name="Gabel C."/>
            <person name="Fuchs M."/>
            <person name="Fartmann B."/>
            <person name="Granderath K."/>
            <person name="Dauner D."/>
            <person name="Herzl A."/>
            <person name="Neumann S."/>
            <person name="Argiriou A."/>
            <person name="Vitale D."/>
            <person name="Liguori R."/>
            <person name="Piravandi E."/>
            <person name="Massenet O."/>
            <person name="Quigley F."/>
            <person name="Clabauld G."/>
            <person name="Muendlein A."/>
            <person name="Felber R."/>
            <person name="Schnabl S."/>
            <person name="Hiller R."/>
            <person name="Schmidt W."/>
            <person name="Lecharny A."/>
            <person name="Aubourg S."/>
            <person name="Chefdor F."/>
            <person name="Cooke R."/>
            <person name="Berger C."/>
            <person name="Monfort A."/>
            <person name="Casacuberta E."/>
            <person name="Gibbons T."/>
            <person name="Weber N."/>
            <person name="Vandenbol M."/>
            <person name="Bargues M."/>
            <person name="Terol J."/>
            <person name="Torres A."/>
            <person name="Perez-Perez A."/>
            <person name="Purnelle B."/>
            <person name="Bent E."/>
            <person name="Johnson S."/>
            <person name="Tacon D."/>
            <person name="Jesse T."/>
            <person name="Heijnen L."/>
            <person name="Schwarz S."/>
            <person name="Scholler P."/>
            <person name="Heber S."/>
            <person name="Francs P."/>
            <person name="Bielke C."/>
            <person name="Frishman D."/>
            <person name="Haase D."/>
            <person name="Lemcke K."/>
            <person name="Mewes H.-W."/>
            <person name="Stocker S."/>
            <person name="Zaccaria P."/>
            <person name="Bevan M."/>
            <person name="Wilson R.K."/>
            <person name="de la Bastide M."/>
            <person name="Habermann K."/>
            <person name="Parnell L."/>
            <person name="Dedhia N."/>
            <person name="Gnoj L."/>
            <person name="Schutz K."/>
            <person name="Huang E."/>
            <person name="Spiegel L."/>
            <person name="Sekhon M."/>
            <person name="Murray J."/>
            <person name="Sheet P."/>
            <person name="Cordes M."/>
            <person name="Abu-Threideh J."/>
            <person name="Stoneking T."/>
            <person name="Kalicki J."/>
            <person name="Graves T."/>
            <person name="Harmon G."/>
            <person name="Edwards J."/>
            <person name="Latreille P."/>
            <person name="Courtney L."/>
            <person name="Cloud J."/>
            <person name="Abbott A."/>
            <person name="Scott K."/>
            <person name="Johnson D."/>
            <person name="Minx P."/>
            <person name="Bentley D."/>
            <person name="Fulton B."/>
            <person name="Miller N."/>
            <person name="Greco T."/>
            <person name="Kemp K."/>
            <person name="Kramer J."/>
            <person name="Fulton L."/>
            <person name="Mardis E."/>
            <person name="Dante M."/>
            <person name="Pepin K."/>
            <person name="Hillier L.W."/>
            <person name="Nelson J."/>
            <person name="Spieth J."/>
            <person name="Ryan E."/>
            <person name="Andrews S."/>
            <person name="Geisel C."/>
            <person name="Layman D."/>
            <person name="Du H."/>
            <person name="Ali J."/>
            <person name="Berghoff A."/>
            <person name="Jones K."/>
            <person name="Drone K."/>
            <person name="Cotton M."/>
            <person name="Joshu C."/>
            <person name="Antonoiu B."/>
            <person name="Zidanic M."/>
            <person name="Strong C."/>
            <person name="Sun H."/>
            <person name="Lamar B."/>
            <person name="Yordan C."/>
            <person name="Ma P."/>
            <person name="Zhong J."/>
            <person name="Preston R."/>
            <person name="Vil D."/>
            <person name="Shekher M."/>
            <person name="Matero A."/>
            <person name="Shah R."/>
            <person name="Swaby I.K."/>
            <person name="O'Shaughnessy A."/>
            <person name="Rodriguez M."/>
            <person name="Hoffman J."/>
            <person name="Till S."/>
            <person name="Granat S."/>
            <person name="Shohdy N."/>
            <person name="Hasegawa A."/>
            <person name="Hameed A."/>
            <person name="Lodhi M."/>
            <person name="Johnson A."/>
            <person name="Chen E."/>
            <person name="Marra M.A."/>
            <person name="Martienssen R."/>
            <person name="McCombie W.R."/>
        </authorList>
    </citation>
    <scope>NUCLEOTIDE SEQUENCE [LARGE SCALE GENOMIC DNA]</scope>
    <source>
        <strain>cv. Columbia</strain>
    </source>
</reference>
<reference key="2">
    <citation type="journal article" date="2017" name="Plant J.">
        <title>Araport11: a complete reannotation of the Arabidopsis thaliana reference genome.</title>
        <authorList>
            <person name="Cheng C.Y."/>
            <person name="Krishnakumar V."/>
            <person name="Chan A.P."/>
            <person name="Thibaud-Nissen F."/>
            <person name="Schobel S."/>
            <person name="Town C.D."/>
        </authorList>
    </citation>
    <scope>GENOME REANNOTATION</scope>
    <source>
        <strain>cv. Columbia</strain>
    </source>
</reference>
<reference key="3">
    <citation type="journal article" date="2006" name="Plant Biotechnol. J.">
        <title>Simultaneous high-throughput recombinational cloning of open reading frames in closed and open configurations.</title>
        <authorList>
            <person name="Underwood B.A."/>
            <person name="Vanderhaeghen R."/>
            <person name="Whitford R."/>
            <person name="Town C.D."/>
            <person name="Hilson P."/>
        </authorList>
    </citation>
    <scope>NUCLEOTIDE SEQUENCE [LARGE SCALE MRNA]</scope>
    <source>
        <strain>cv. Columbia</strain>
    </source>
</reference>
<reference key="4">
    <citation type="submission" date="2002-03" db="EMBL/GenBank/DDBJ databases">
        <title>Full-length cDNA from Arabidopsis thaliana.</title>
        <authorList>
            <person name="Brover V.V."/>
            <person name="Troukhan M.E."/>
            <person name="Alexandrov N.A."/>
            <person name="Lu Y.-P."/>
            <person name="Flavell R.B."/>
            <person name="Feldmann K.A."/>
        </authorList>
    </citation>
    <scope>NUCLEOTIDE SEQUENCE [LARGE SCALE MRNA]</scope>
</reference>
<reference key="5">
    <citation type="submission" date="2006-09" db="EMBL/GenBank/DDBJ databases">
        <title>Arabidopsis ORF clones.</title>
        <authorList>
            <person name="Bautista V.R."/>
            <person name="Kim C.J."/>
            <person name="Chen H."/>
            <person name="Quinitio C."/>
            <person name="Ecker J.R."/>
        </authorList>
    </citation>
    <scope>NUCLEOTIDE SEQUENCE [LARGE SCALE MRNA]</scope>
    <source>
        <strain>cv. Columbia</strain>
    </source>
</reference>
<comment type="sequence caution" evidence="2">
    <conflict type="erroneous gene model prediction">
        <sequence resource="EMBL-CDS" id="CAB77062"/>
    </conflict>
    <text>The predicted gene At4g39750 has been split into 3 genes: At4g39750, At4g39753 and At4g39756.</text>
</comment>
<comment type="sequence caution" evidence="2">
    <conflict type="erroneous gene model prediction">
        <sequence resource="EMBL-CDS" id="CAB80638"/>
    </conflict>
    <text>The predicted gene At4g39750 has been split into 3 genes: At4g39750, At4g39753 and At4g39756.</text>
</comment>
<name>FK104_ARATH</name>
<accession>Q1PE09</accession>
<accession>Q8LEQ6</accession>
<accession>Q9LDK6</accession>
<organism>
    <name type="scientific">Arabidopsis thaliana</name>
    <name type="common">Mouse-ear cress</name>
    <dbReference type="NCBI Taxonomy" id="3702"/>
    <lineage>
        <taxon>Eukaryota</taxon>
        <taxon>Viridiplantae</taxon>
        <taxon>Streptophyta</taxon>
        <taxon>Embryophyta</taxon>
        <taxon>Tracheophyta</taxon>
        <taxon>Spermatophyta</taxon>
        <taxon>Magnoliopsida</taxon>
        <taxon>eudicotyledons</taxon>
        <taxon>Gunneridae</taxon>
        <taxon>Pentapetalae</taxon>
        <taxon>rosids</taxon>
        <taxon>malvids</taxon>
        <taxon>Brassicales</taxon>
        <taxon>Brassicaceae</taxon>
        <taxon>Camelineae</taxon>
        <taxon>Arabidopsis</taxon>
    </lineage>
</organism>
<gene>
    <name type="ordered locus">At4g39753</name>
    <name type="ORF">T19P19.1</name>
</gene>
<proteinExistence type="evidence at transcript level"/>
<dbReference type="EMBL" id="AL022605">
    <property type="protein sequence ID" value="CAB77062.1"/>
    <property type="status" value="ALT_SEQ"/>
    <property type="molecule type" value="Genomic_DNA"/>
</dbReference>
<dbReference type="EMBL" id="AL161595">
    <property type="protein sequence ID" value="CAB80638.1"/>
    <property type="status" value="ALT_SEQ"/>
    <property type="molecule type" value="Genomic_DNA"/>
</dbReference>
<dbReference type="EMBL" id="CP002687">
    <property type="protein sequence ID" value="AEE87114.1"/>
    <property type="molecule type" value="Genomic_DNA"/>
</dbReference>
<dbReference type="EMBL" id="DQ446909">
    <property type="protein sequence ID" value="ABE66122.1"/>
    <property type="molecule type" value="mRNA"/>
</dbReference>
<dbReference type="EMBL" id="AY085293">
    <property type="protein sequence ID" value="AAM62525.1"/>
    <property type="molecule type" value="mRNA"/>
</dbReference>
<dbReference type="EMBL" id="BT029018">
    <property type="protein sequence ID" value="ABI93927.1"/>
    <property type="molecule type" value="mRNA"/>
</dbReference>
<dbReference type="PIR" id="H85470">
    <property type="entry name" value="H85470"/>
</dbReference>
<dbReference type="PIR" id="T05012">
    <property type="entry name" value="T05012"/>
</dbReference>
<dbReference type="RefSeq" id="NP_568070.1">
    <property type="nucleotide sequence ID" value="NM_120137.2"/>
</dbReference>
<dbReference type="SMR" id="Q1PE09"/>
<dbReference type="BioGRID" id="15412">
    <property type="interactions" value="2"/>
</dbReference>
<dbReference type="FunCoup" id="Q1PE09">
    <property type="interactions" value="3"/>
</dbReference>
<dbReference type="IntAct" id="Q1PE09">
    <property type="interactions" value="2"/>
</dbReference>
<dbReference type="PaxDb" id="3702-AT4G39753.1"/>
<dbReference type="EnsemblPlants" id="AT4G39753.1">
    <property type="protein sequence ID" value="AT4G39753.1"/>
    <property type="gene ID" value="AT4G39753"/>
</dbReference>
<dbReference type="GeneID" id="830132"/>
<dbReference type="Gramene" id="AT4G39753.1">
    <property type="protein sequence ID" value="AT4G39753.1"/>
    <property type="gene ID" value="AT4G39753"/>
</dbReference>
<dbReference type="KEGG" id="ath:AT4G39753"/>
<dbReference type="Araport" id="AT4G39753"/>
<dbReference type="TAIR" id="AT4G39753"/>
<dbReference type="eggNOG" id="KOG1072">
    <property type="taxonomic scope" value="Eukaryota"/>
</dbReference>
<dbReference type="HOGENOM" id="CLU_032521_1_2_1"/>
<dbReference type="InParanoid" id="Q1PE09"/>
<dbReference type="OMA" id="TESANWG"/>
<dbReference type="PhylomeDB" id="Q1PE09"/>
<dbReference type="PRO" id="PR:Q1PE09"/>
<dbReference type="Proteomes" id="UP000006548">
    <property type="component" value="Chromosome 4"/>
</dbReference>
<dbReference type="ExpressionAtlas" id="Q1PE09">
    <property type="expression patterns" value="baseline and differential"/>
</dbReference>
<dbReference type="Gene3D" id="2.120.10.80">
    <property type="entry name" value="Kelch-type beta propeller"/>
    <property type="match status" value="1"/>
</dbReference>
<dbReference type="InterPro" id="IPR036047">
    <property type="entry name" value="F-box-like_dom_sf"/>
</dbReference>
<dbReference type="InterPro" id="IPR050354">
    <property type="entry name" value="F-box/kelch-repeat_ARATH"/>
</dbReference>
<dbReference type="InterPro" id="IPR001810">
    <property type="entry name" value="F-box_dom"/>
</dbReference>
<dbReference type="InterPro" id="IPR015915">
    <property type="entry name" value="Kelch-typ_b-propeller"/>
</dbReference>
<dbReference type="PANTHER" id="PTHR24414:SF106">
    <property type="entry name" value="F-BOX DOMAIN-CONTAINING PROTEIN"/>
    <property type="match status" value="1"/>
</dbReference>
<dbReference type="PANTHER" id="PTHR24414">
    <property type="entry name" value="F-BOX/KELCH-REPEAT PROTEIN SKIP4"/>
    <property type="match status" value="1"/>
</dbReference>
<dbReference type="Pfam" id="PF00646">
    <property type="entry name" value="F-box"/>
    <property type="match status" value="1"/>
</dbReference>
<dbReference type="Pfam" id="PF25210">
    <property type="entry name" value="Kelch_FKB95"/>
    <property type="match status" value="1"/>
</dbReference>
<dbReference type="SMART" id="SM00256">
    <property type="entry name" value="FBOX"/>
    <property type="match status" value="1"/>
</dbReference>
<dbReference type="SUPFAM" id="SSF81383">
    <property type="entry name" value="F-box domain"/>
    <property type="match status" value="1"/>
</dbReference>
<dbReference type="SUPFAM" id="SSF117281">
    <property type="entry name" value="Kelch motif"/>
    <property type="match status" value="1"/>
</dbReference>